<accession>P55788</accession>
<sequence length="21" mass="2436">GSKKPVPIIYCNRRTGKCQRM</sequence>
<dbReference type="PDB" id="5XO3">
    <property type="method" value="NMR"/>
    <property type="chains" value="A=1-20"/>
</dbReference>
<dbReference type="PDB" id="5XO4">
    <property type="method" value="NMR"/>
    <property type="chains" value="A=1-21"/>
</dbReference>
<dbReference type="PDB" id="5XO5">
    <property type="method" value="NMR"/>
    <property type="chains" value="A=1-21"/>
</dbReference>
<dbReference type="PDB" id="5XO9">
    <property type="method" value="NMR"/>
    <property type="chains" value="A/B=1-21"/>
</dbReference>
<dbReference type="PDB" id="5XOA">
    <property type="method" value="NMR"/>
    <property type="chains" value="A/B=1-21"/>
</dbReference>
<dbReference type="PDB" id="5XOK">
    <property type="method" value="NMR"/>
    <property type="chains" value="A/B=1-21"/>
</dbReference>
<dbReference type="PDB" id="5XOL">
    <property type="method" value="NMR"/>
    <property type="chains" value="A/B=1-21"/>
</dbReference>
<dbReference type="PDB" id="6AAB">
    <property type="method" value="NMR"/>
    <property type="chains" value="A=1-21"/>
</dbReference>
<dbReference type="PDB" id="6AFQ">
    <property type="method" value="NMR"/>
    <property type="chains" value="A=1-20"/>
</dbReference>
<dbReference type="PDB" id="6GD5">
    <property type="method" value="NMR"/>
    <property type="chains" value="B=1-21"/>
</dbReference>
<dbReference type="PDB" id="7QS6">
    <property type="method" value="NMR"/>
    <property type="chains" value="B=6-21"/>
</dbReference>
<dbReference type="PDB" id="7ZAX">
    <property type="method" value="NMR"/>
    <property type="chains" value="B=6-21"/>
</dbReference>
<dbReference type="PDB" id="7ZED">
    <property type="method" value="NMR"/>
    <property type="chains" value="B=6-21"/>
</dbReference>
<dbReference type="PDB" id="8BSS">
    <property type="method" value="NMR"/>
    <property type="chains" value="B=6-21"/>
</dbReference>
<dbReference type="PDB" id="8GAJ">
    <property type="method" value="X-ray"/>
    <property type="resolution" value="2.43 A"/>
    <property type="chains" value="B/D=1-21"/>
</dbReference>
<dbReference type="PDB" id="8IKQ">
    <property type="method" value="NMR"/>
    <property type="chains" value="A=8-21"/>
</dbReference>
<dbReference type="PDB" id="8IL1">
    <property type="method" value="NMR"/>
    <property type="chains" value="A=8-21"/>
</dbReference>
<dbReference type="PDB" id="8IL2">
    <property type="method" value="NMR"/>
    <property type="chains" value="A=7-21"/>
</dbReference>
<dbReference type="PDB" id="8IL6">
    <property type="method" value="NMR"/>
    <property type="chains" value="A=7-21"/>
</dbReference>
<dbReference type="PDB" id="8ONU">
    <property type="method" value="NMR"/>
    <property type="chains" value="B=6-21"/>
</dbReference>
<dbReference type="PDB" id="8TFV">
    <property type="method" value="NMR"/>
    <property type="chains" value="A=1-21"/>
</dbReference>
<dbReference type="PDB" id="8X3N">
    <property type="method" value="NMR"/>
    <property type="chains" value="A=6-20"/>
</dbReference>
<dbReference type="PDB" id="8X40">
    <property type="method" value="NMR"/>
    <property type="chains" value="A=6-20"/>
</dbReference>
<dbReference type="PDB" id="8XTH">
    <property type="method" value="NMR"/>
    <property type="chains" value="A=8-21"/>
</dbReference>
<dbReference type="PDBsum" id="5XO3"/>
<dbReference type="PDBsum" id="5XO4"/>
<dbReference type="PDBsum" id="5XO5"/>
<dbReference type="PDBsum" id="5XO9"/>
<dbReference type="PDBsum" id="5XOA"/>
<dbReference type="PDBsum" id="5XOK"/>
<dbReference type="PDBsum" id="5XOL"/>
<dbReference type="PDBsum" id="6AAB"/>
<dbReference type="PDBsum" id="6AFQ"/>
<dbReference type="PDBsum" id="6GD5"/>
<dbReference type="PDBsum" id="7QS6"/>
<dbReference type="PDBsum" id="7ZAX"/>
<dbReference type="PDBsum" id="7ZED"/>
<dbReference type="PDBsum" id="8BSS"/>
<dbReference type="PDBsum" id="8GAJ"/>
<dbReference type="PDBsum" id="8IKQ"/>
<dbReference type="PDBsum" id="8IL1"/>
<dbReference type="PDBsum" id="8IL2"/>
<dbReference type="PDBsum" id="8IL6"/>
<dbReference type="PDBsum" id="8ONU"/>
<dbReference type="PDBsum" id="8TFV"/>
<dbReference type="PDBsum" id="8X3N"/>
<dbReference type="PDBsum" id="8X40"/>
<dbReference type="PDBsum" id="8XTH"/>
<dbReference type="BMRB" id="P55788"/>
<dbReference type="SMR" id="P55788"/>
<dbReference type="GO" id="GO:0005576">
    <property type="term" value="C:extracellular region"/>
    <property type="evidence" value="ECO:0007669"/>
    <property type="project" value="UniProtKB-SubCell"/>
</dbReference>
<dbReference type="GO" id="GO:0042742">
    <property type="term" value="P:defense response to bacterium"/>
    <property type="evidence" value="ECO:0007669"/>
    <property type="project" value="UniProtKB-KW"/>
</dbReference>
<dbReference type="GO" id="GO:0050832">
    <property type="term" value="P:defense response to fungus"/>
    <property type="evidence" value="ECO:0007669"/>
    <property type="project" value="UniProtKB-KW"/>
</dbReference>
<dbReference type="GO" id="GO:0045087">
    <property type="term" value="P:innate immune response"/>
    <property type="evidence" value="ECO:0007669"/>
    <property type="project" value="UniProtKB-KW"/>
</dbReference>
<dbReference type="GO" id="GO:0031640">
    <property type="term" value="P:killing of cells of another organism"/>
    <property type="evidence" value="ECO:0007669"/>
    <property type="project" value="UniProtKB-KW"/>
</dbReference>
<protein>
    <recommendedName>
        <fullName>Thanatin</fullName>
    </recommendedName>
</protein>
<name>THAN_PODMA</name>
<keyword id="KW-0002">3D-structure</keyword>
<keyword id="KW-0044">Antibiotic</keyword>
<keyword id="KW-0929">Antimicrobial</keyword>
<keyword id="KW-0903">Direct protein sequencing</keyword>
<keyword id="KW-1015">Disulfide bond</keyword>
<keyword id="KW-0295">Fungicide</keyword>
<keyword id="KW-0391">Immunity</keyword>
<keyword id="KW-0399">Innate immunity</keyword>
<keyword id="KW-0964">Secreted</keyword>
<proteinExistence type="evidence at protein level"/>
<feature type="peptide" id="PRO_0000043595" description="Thanatin">
    <location>
        <begin position="1"/>
        <end position="21"/>
    </location>
</feature>
<feature type="disulfide bond">
    <location>
        <begin position="11"/>
        <end position="18"/>
    </location>
</feature>
<feature type="strand" evidence="1">
    <location>
        <begin position="3"/>
        <end position="6"/>
    </location>
</feature>
<feature type="strand" evidence="2">
    <location>
        <begin position="8"/>
        <end position="12"/>
    </location>
</feature>
<feature type="turn" evidence="2">
    <location>
        <begin position="13"/>
        <end position="15"/>
    </location>
</feature>
<feature type="strand" evidence="2">
    <location>
        <begin position="18"/>
        <end position="20"/>
    </location>
</feature>
<reference key="1">
    <citation type="journal article" date="1996" name="Proc. Natl. Acad. Sci. U.S.A.">
        <title>Structure-activity analysis of thanatin, a 21-residue inducible insect defense peptide with sequence homology to frog skin antimicrobial peptides.</title>
        <authorList>
            <person name="Fehlbaum P."/>
            <person name="Bulet P."/>
            <person name="Chernysh S."/>
            <person name="Briand J.-P."/>
            <person name="Roussel J.-P."/>
            <person name="Letellier L."/>
            <person name="Hetru C."/>
            <person name="Hoffmann J.A."/>
        </authorList>
    </citation>
    <scope>PROTEIN SEQUENCE</scope>
    <scope>CHARACTERIZATION</scope>
    <source>
        <tissue>Hemolymph</tissue>
    </source>
</reference>
<reference key="2">
    <citation type="journal article" date="1998" name="Eur. J. Biochem.">
        <title>Solution structure of thanatin, a potent bactericidal and fungicidal insect peptide, determined from proton two-dimensional nuclear magnetic resonance data.</title>
        <authorList>
            <person name="Mandard N."/>
            <person name="Sodano P."/>
            <person name="Labbe H."/>
            <person name="Bonmatin J.-M."/>
            <person name="Bulet P."/>
            <person name="Hetru C."/>
            <person name="Ptak M."/>
            <person name="Vovelle F."/>
        </authorList>
    </citation>
    <scope>STRUCTURE BY NMR</scope>
</reference>
<evidence type="ECO:0007829" key="1">
    <source>
        <dbReference type="PDB" id="5XO9"/>
    </source>
</evidence>
<evidence type="ECO:0007829" key="2">
    <source>
        <dbReference type="PDB" id="8GAJ"/>
    </source>
</evidence>
<comment type="function">
    <text>Insect defense peptide with a broad spectrum of activity against Gram-positive and Gram-negative bacteria and fungi. No activity against S.aureus. Stops respiration in bacteria but does not permeabilize their inner membranes.</text>
</comment>
<comment type="subcellular location">
    <subcellularLocation>
        <location>Secreted</location>
    </subcellularLocation>
</comment>
<comment type="domain">
    <text>Four regions are important for the activity: the C-terminal loop, the last three C-terminal residues, the stretch of seven N-terminal residues and residues 8-9 are necessary for the antifungal activity and dispensable for antibacterial activity.</text>
</comment>
<organism>
    <name type="scientific">Podisus maculiventris</name>
    <name type="common">Spined soldier bug</name>
    <name type="synonym">Pentatoma maculiventris</name>
    <dbReference type="NCBI Taxonomy" id="29025"/>
    <lineage>
        <taxon>Eukaryota</taxon>
        <taxon>Metazoa</taxon>
        <taxon>Ecdysozoa</taxon>
        <taxon>Arthropoda</taxon>
        <taxon>Hexapoda</taxon>
        <taxon>Insecta</taxon>
        <taxon>Pterygota</taxon>
        <taxon>Neoptera</taxon>
        <taxon>Paraneoptera</taxon>
        <taxon>Hemiptera</taxon>
        <taxon>Heteroptera</taxon>
        <taxon>Panheteroptera</taxon>
        <taxon>Pentatomomorpha</taxon>
        <taxon>Pentatomoidea</taxon>
        <taxon>Pentatomidae</taxon>
        <taxon>Asopinae</taxon>
        <taxon>Podisus</taxon>
    </lineage>
</organism>